<reference key="1">
    <citation type="journal article" date="2008" name="Antimicrob. Agents Chemother.">
        <title>Mutated response regulator graR is responsible for phenotypic conversion of Staphylococcus aureus from heterogeneous vancomycin-intermediate resistance to vancomycin-intermediate resistance.</title>
        <authorList>
            <person name="Neoh H.-M."/>
            <person name="Cui L."/>
            <person name="Yuzawa H."/>
            <person name="Takeuchi F."/>
            <person name="Matsuo M."/>
            <person name="Hiramatsu K."/>
        </authorList>
    </citation>
    <scope>NUCLEOTIDE SEQUENCE [LARGE SCALE GENOMIC DNA]</scope>
    <source>
        <strain>Mu3 / ATCC 700698</strain>
    </source>
</reference>
<dbReference type="EMBL" id="AP009324">
    <property type="protein sequence ID" value="BAF78975.1"/>
    <property type="molecule type" value="Genomic_DNA"/>
</dbReference>
<dbReference type="RefSeq" id="WP_001048816.1">
    <property type="nucleotide sequence ID" value="NZ_CTYB01000015.1"/>
</dbReference>
<dbReference type="SMR" id="A7X4V0"/>
<dbReference type="GeneID" id="98346415"/>
<dbReference type="KEGG" id="saw:SAHV_2092"/>
<dbReference type="HOGENOM" id="CLU_148047_1_1_9"/>
<dbReference type="GO" id="GO:0005886">
    <property type="term" value="C:plasma membrane"/>
    <property type="evidence" value="ECO:0007669"/>
    <property type="project" value="UniProtKB-SubCell"/>
</dbReference>
<dbReference type="GO" id="GO:0045259">
    <property type="term" value="C:proton-transporting ATP synthase complex"/>
    <property type="evidence" value="ECO:0007669"/>
    <property type="project" value="UniProtKB-KW"/>
</dbReference>
<dbReference type="GO" id="GO:0033177">
    <property type="term" value="C:proton-transporting two-sector ATPase complex, proton-transporting domain"/>
    <property type="evidence" value="ECO:0007669"/>
    <property type="project" value="InterPro"/>
</dbReference>
<dbReference type="GO" id="GO:0008289">
    <property type="term" value="F:lipid binding"/>
    <property type="evidence" value="ECO:0007669"/>
    <property type="project" value="UniProtKB-KW"/>
</dbReference>
<dbReference type="GO" id="GO:0046933">
    <property type="term" value="F:proton-transporting ATP synthase activity, rotational mechanism"/>
    <property type="evidence" value="ECO:0007669"/>
    <property type="project" value="UniProtKB-UniRule"/>
</dbReference>
<dbReference type="CDD" id="cd18185">
    <property type="entry name" value="ATP-synt_Fo_c_ATPE"/>
    <property type="match status" value="1"/>
</dbReference>
<dbReference type="FunFam" id="1.20.20.10:FF:000004">
    <property type="entry name" value="ATP synthase subunit c"/>
    <property type="match status" value="1"/>
</dbReference>
<dbReference type="Gene3D" id="1.20.20.10">
    <property type="entry name" value="F1F0 ATP synthase subunit C"/>
    <property type="match status" value="1"/>
</dbReference>
<dbReference type="HAMAP" id="MF_01396">
    <property type="entry name" value="ATP_synth_c_bact"/>
    <property type="match status" value="1"/>
</dbReference>
<dbReference type="InterPro" id="IPR005953">
    <property type="entry name" value="ATP_synth_csu_bac/chlpt"/>
</dbReference>
<dbReference type="InterPro" id="IPR000454">
    <property type="entry name" value="ATP_synth_F0_csu"/>
</dbReference>
<dbReference type="InterPro" id="IPR020537">
    <property type="entry name" value="ATP_synth_F0_csu_DDCD_BS"/>
</dbReference>
<dbReference type="InterPro" id="IPR038662">
    <property type="entry name" value="ATP_synth_F0_csu_sf"/>
</dbReference>
<dbReference type="InterPro" id="IPR002379">
    <property type="entry name" value="ATPase_proteolipid_c-like_dom"/>
</dbReference>
<dbReference type="InterPro" id="IPR035921">
    <property type="entry name" value="F/V-ATP_Csub_sf"/>
</dbReference>
<dbReference type="NCBIfam" id="TIGR01260">
    <property type="entry name" value="ATP_synt_c"/>
    <property type="match status" value="1"/>
</dbReference>
<dbReference type="NCBIfam" id="NF005363">
    <property type="entry name" value="PRK06876.1"/>
    <property type="match status" value="1"/>
</dbReference>
<dbReference type="Pfam" id="PF00137">
    <property type="entry name" value="ATP-synt_C"/>
    <property type="match status" value="1"/>
</dbReference>
<dbReference type="PRINTS" id="PR00124">
    <property type="entry name" value="ATPASEC"/>
</dbReference>
<dbReference type="SUPFAM" id="SSF81333">
    <property type="entry name" value="F1F0 ATP synthase subunit C"/>
    <property type="match status" value="1"/>
</dbReference>
<dbReference type="PROSITE" id="PS00605">
    <property type="entry name" value="ATPASE_C"/>
    <property type="match status" value="1"/>
</dbReference>
<comment type="function">
    <text evidence="1">F(1)F(0) ATP synthase produces ATP from ADP in the presence of a proton or sodium gradient. F-type ATPases consist of two structural domains, F(1) containing the extramembraneous catalytic core and F(0) containing the membrane proton channel, linked together by a central stalk and a peripheral stalk. During catalysis, ATP synthesis in the catalytic domain of F(1) is coupled via a rotary mechanism of the central stalk subunits to proton translocation.</text>
</comment>
<comment type="function">
    <text evidence="1">Key component of the F(0) channel; it plays a direct role in translocation across the membrane. A homomeric c-ring of between 10-14 subunits forms the central stalk rotor element with the F(1) delta and epsilon subunits.</text>
</comment>
<comment type="subunit">
    <text evidence="1">F-type ATPases have 2 components, F(1) - the catalytic core - and F(0) - the membrane proton channel. F(1) has five subunits: alpha(3), beta(3), gamma(1), delta(1), epsilon(1). F(0) has three main subunits: a(1), b(2) and c(10-14). The alpha and beta chains form an alternating ring which encloses part of the gamma chain. F(1) is attached to F(0) by a central stalk formed by the gamma and epsilon chains, while a peripheral stalk is formed by the delta and b chains.</text>
</comment>
<comment type="subcellular location">
    <subcellularLocation>
        <location evidence="1">Cell membrane</location>
        <topology evidence="1">Multi-pass membrane protein</topology>
    </subcellularLocation>
</comment>
<comment type="similarity">
    <text evidence="1">Belongs to the ATPase C chain family.</text>
</comment>
<keyword id="KW-0066">ATP synthesis</keyword>
<keyword id="KW-1003">Cell membrane</keyword>
<keyword id="KW-0138">CF(0)</keyword>
<keyword id="KW-0375">Hydrogen ion transport</keyword>
<keyword id="KW-0406">Ion transport</keyword>
<keyword id="KW-0446">Lipid-binding</keyword>
<keyword id="KW-0472">Membrane</keyword>
<keyword id="KW-0812">Transmembrane</keyword>
<keyword id="KW-1133">Transmembrane helix</keyword>
<keyword id="KW-0813">Transport</keyword>
<evidence type="ECO:0000255" key="1">
    <source>
        <dbReference type="HAMAP-Rule" id="MF_01396"/>
    </source>
</evidence>
<accession>A7X4V0</accession>
<name>ATPL_STAA1</name>
<proteinExistence type="inferred from homology"/>
<gene>
    <name evidence="1" type="primary">atpE</name>
    <name type="ordered locus">SAHV_2092</name>
</gene>
<protein>
    <recommendedName>
        <fullName evidence="1">ATP synthase subunit c</fullName>
    </recommendedName>
    <alternativeName>
        <fullName evidence="1">ATP synthase F(0) sector subunit c</fullName>
    </alternativeName>
    <alternativeName>
        <fullName evidence="1">F-type ATPase subunit c</fullName>
        <shortName evidence="1">F-ATPase subunit c</shortName>
    </alternativeName>
    <alternativeName>
        <fullName evidence="1">Lipid-binding protein</fullName>
    </alternativeName>
</protein>
<organism>
    <name type="scientific">Staphylococcus aureus (strain Mu3 / ATCC 700698)</name>
    <dbReference type="NCBI Taxonomy" id="418127"/>
    <lineage>
        <taxon>Bacteria</taxon>
        <taxon>Bacillati</taxon>
        <taxon>Bacillota</taxon>
        <taxon>Bacilli</taxon>
        <taxon>Bacillales</taxon>
        <taxon>Staphylococcaceae</taxon>
        <taxon>Staphylococcus</taxon>
    </lineage>
</organism>
<feature type="chain" id="PRO_1000184493" description="ATP synthase subunit c">
    <location>
        <begin position="1"/>
        <end position="70"/>
    </location>
</feature>
<feature type="transmembrane region" description="Helical" evidence="1">
    <location>
        <begin position="4"/>
        <end position="24"/>
    </location>
</feature>
<feature type="transmembrane region" description="Helical" evidence="1">
    <location>
        <begin position="45"/>
        <end position="65"/>
    </location>
</feature>
<feature type="site" description="Reversibly protonated during proton transport" evidence="1">
    <location>
        <position position="54"/>
    </location>
</feature>
<sequence length="70" mass="6979">MNLIAAAIAIGLSALGAGIGNGLIVSRTVEGVARQPEARGQLMGIMFIGVGLVEALPIIGVVIAFMTFAG</sequence>